<evidence type="ECO:0000255" key="1">
    <source>
        <dbReference type="HAMAP-Rule" id="MF_00003"/>
    </source>
</evidence>
<name>RBFA_BACLD</name>
<comment type="function">
    <text evidence="1">One of several proteins that assist in the late maturation steps of the functional core of the 30S ribosomal subunit. Associates with free 30S ribosomal subunits (but not with 30S subunits that are part of 70S ribosomes or polysomes). Required for efficient processing of 16S rRNA. May interact with the 5'-terminal helix region of 16S rRNA.</text>
</comment>
<comment type="subunit">
    <text evidence="1">Monomer. Binds 30S ribosomal subunits, but not 50S ribosomal subunits or 70S ribosomes.</text>
</comment>
<comment type="subcellular location">
    <subcellularLocation>
        <location evidence="1">Cytoplasm</location>
    </subcellularLocation>
</comment>
<comment type="similarity">
    <text evidence="1">Belongs to the RbfA family.</text>
</comment>
<feature type="chain" id="PRO_0000102619" description="Ribosome-binding factor A">
    <location>
        <begin position="1"/>
        <end position="117"/>
    </location>
</feature>
<organism>
    <name type="scientific">Bacillus licheniformis (strain ATCC 14580 / DSM 13 / JCM 2505 / CCUG 7422 / NBRC 12200 / NCIMB 9375 / NCTC 10341 / NRRL NRS-1264 / Gibson 46)</name>
    <dbReference type="NCBI Taxonomy" id="279010"/>
    <lineage>
        <taxon>Bacteria</taxon>
        <taxon>Bacillati</taxon>
        <taxon>Bacillota</taxon>
        <taxon>Bacilli</taxon>
        <taxon>Bacillales</taxon>
        <taxon>Bacillaceae</taxon>
        <taxon>Bacillus</taxon>
    </lineage>
</organism>
<dbReference type="EMBL" id="AE017333">
    <property type="protein sequence ID" value="AAU40785.1"/>
    <property type="molecule type" value="Genomic_DNA"/>
</dbReference>
<dbReference type="EMBL" id="CP000002">
    <property type="protein sequence ID" value="AAU23425.1"/>
    <property type="molecule type" value="Genomic_DNA"/>
</dbReference>
<dbReference type="RefSeq" id="WP_003181873.1">
    <property type="nucleotide sequence ID" value="NC_006322.1"/>
</dbReference>
<dbReference type="SMR" id="Q65JH9"/>
<dbReference type="STRING" id="279010.BL01221"/>
<dbReference type="GeneID" id="92861517"/>
<dbReference type="KEGG" id="bld:BLi01890"/>
<dbReference type="KEGG" id="bli:BL01221"/>
<dbReference type="eggNOG" id="COG0858">
    <property type="taxonomic scope" value="Bacteria"/>
</dbReference>
<dbReference type="HOGENOM" id="CLU_089475_6_3_9"/>
<dbReference type="Proteomes" id="UP000000606">
    <property type="component" value="Chromosome"/>
</dbReference>
<dbReference type="GO" id="GO:0005829">
    <property type="term" value="C:cytosol"/>
    <property type="evidence" value="ECO:0007669"/>
    <property type="project" value="TreeGrafter"/>
</dbReference>
<dbReference type="GO" id="GO:0043024">
    <property type="term" value="F:ribosomal small subunit binding"/>
    <property type="evidence" value="ECO:0007669"/>
    <property type="project" value="TreeGrafter"/>
</dbReference>
<dbReference type="GO" id="GO:0030490">
    <property type="term" value="P:maturation of SSU-rRNA"/>
    <property type="evidence" value="ECO:0007669"/>
    <property type="project" value="UniProtKB-UniRule"/>
</dbReference>
<dbReference type="FunFam" id="3.30.300.20:FF:000009">
    <property type="entry name" value="Ribosome-binding factor A"/>
    <property type="match status" value="1"/>
</dbReference>
<dbReference type="Gene3D" id="3.30.300.20">
    <property type="match status" value="1"/>
</dbReference>
<dbReference type="HAMAP" id="MF_00003">
    <property type="entry name" value="RbfA"/>
    <property type="match status" value="1"/>
</dbReference>
<dbReference type="InterPro" id="IPR015946">
    <property type="entry name" value="KH_dom-like_a/b"/>
</dbReference>
<dbReference type="InterPro" id="IPR000238">
    <property type="entry name" value="RbfA"/>
</dbReference>
<dbReference type="InterPro" id="IPR023799">
    <property type="entry name" value="RbfA_dom_sf"/>
</dbReference>
<dbReference type="InterPro" id="IPR020053">
    <property type="entry name" value="Ribosome-bd_factorA_CS"/>
</dbReference>
<dbReference type="NCBIfam" id="TIGR00082">
    <property type="entry name" value="rbfA"/>
    <property type="match status" value="1"/>
</dbReference>
<dbReference type="PANTHER" id="PTHR33515">
    <property type="entry name" value="RIBOSOME-BINDING FACTOR A, CHLOROPLASTIC-RELATED"/>
    <property type="match status" value="1"/>
</dbReference>
<dbReference type="PANTHER" id="PTHR33515:SF1">
    <property type="entry name" value="RIBOSOME-BINDING FACTOR A, CHLOROPLASTIC-RELATED"/>
    <property type="match status" value="1"/>
</dbReference>
<dbReference type="Pfam" id="PF02033">
    <property type="entry name" value="RBFA"/>
    <property type="match status" value="1"/>
</dbReference>
<dbReference type="SUPFAM" id="SSF89919">
    <property type="entry name" value="Ribosome-binding factor A, RbfA"/>
    <property type="match status" value="1"/>
</dbReference>
<dbReference type="PROSITE" id="PS01319">
    <property type="entry name" value="RBFA"/>
    <property type="match status" value="1"/>
</dbReference>
<accession>Q65JH9</accession>
<accession>Q62UY4</accession>
<gene>
    <name evidence="1" type="primary">rbfA</name>
    <name type="ordered locus">BLi01890</name>
    <name type="ordered locus">BL01221</name>
</gene>
<sequence length="117" mass="13401">MTMRATRVGEQMKKELGDIIGRKLKDPRIGFLTVTDVRVSGDLQIAKVYISVLGDEKKREETLKGLAKAKGFIRSELGNRIRLRKTPEIHFEFDESIDYGNRIETLIHELNANKEES</sequence>
<reference key="1">
    <citation type="journal article" date="2004" name="J. Mol. Microbiol. Biotechnol.">
        <title>The complete genome sequence of Bacillus licheniformis DSM13, an organism with great industrial potential.</title>
        <authorList>
            <person name="Veith B."/>
            <person name="Herzberg C."/>
            <person name="Steckel S."/>
            <person name="Feesche J."/>
            <person name="Maurer K.H."/>
            <person name="Ehrenreich P."/>
            <person name="Baeumer S."/>
            <person name="Henne A."/>
            <person name="Liesegang H."/>
            <person name="Merkl R."/>
            <person name="Ehrenreich A."/>
            <person name="Gottschalk G."/>
        </authorList>
    </citation>
    <scope>NUCLEOTIDE SEQUENCE [LARGE SCALE GENOMIC DNA]</scope>
    <source>
        <strain>ATCC 14580 / DSM 13 / JCM 2505 / CCUG 7422 / NBRC 12200 / NCIMB 9375 / NCTC 10341 / NRRL NRS-1264 / Gibson 46</strain>
    </source>
</reference>
<reference key="2">
    <citation type="journal article" date="2004" name="Genome Biol.">
        <title>Complete genome sequence of the industrial bacterium Bacillus licheniformis and comparisons with closely related Bacillus species.</title>
        <authorList>
            <person name="Rey M.W."/>
            <person name="Ramaiya P."/>
            <person name="Nelson B.A."/>
            <person name="Brody-Karpin S.D."/>
            <person name="Zaretsky E.J."/>
            <person name="Tang M."/>
            <person name="Lopez de Leon A."/>
            <person name="Xiang H."/>
            <person name="Gusti V."/>
            <person name="Clausen I.G."/>
            <person name="Olsen P.B."/>
            <person name="Rasmussen M.D."/>
            <person name="Andersen J.T."/>
            <person name="Joergensen P.L."/>
            <person name="Larsen T.S."/>
            <person name="Sorokin A."/>
            <person name="Bolotin A."/>
            <person name="Lapidus A."/>
            <person name="Galleron N."/>
            <person name="Ehrlich S.D."/>
            <person name="Berka R.M."/>
        </authorList>
    </citation>
    <scope>NUCLEOTIDE SEQUENCE [LARGE SCALE GENOMIC DNA]</scope>
    <source>
        <strain>ATCC 14580 / DSM 13 / JCM 2505 / CCUG 7422 / NBRC 12200 / NCIMB 9375 / NCTC 10341 / NRRL NRS-1264 / Gibson 46</strain>
    </source>
</reference>
<proteinExistence type="inferred from homology"/>
<keyword id="KW-0963">Cytoplasm</keyword>
<keyword id="KW-1185">Reference proteome</keyword>
<keyword id="KW-0690">Ribosome biogenesis</keyword>
<protein>
    <recommendedName>
        <fullName evidence="1">Ribosome-binding factor A</fullName>
    </recommendedName>
</protein>